<feature type="chain" id="PRO_0000104290" description="Large ribosomal subunit protein uL11">
    <location>
        <begin position="1"/>
        <end position="141"/>
    </location>
</feature>
<protein>
    <recommendedName>
        <fullName evidence="1">Large ribosomal subunit protein uL11</fullName>
    </recommendedName>
    <alternativeName>
        <fullName evidence="2">50S ribosomal protein L11</fullName>
    </alternativeName>
</protein>
<dbReference type="EMBL" id="BA000043">
    <property type="protein sequence ID" value="BAD74378.1"/>
    <property type="molecule type" value="Genomic_DNA"/>
</dbReference>
<dbReference type="RefSeq" id="WP_011229608.1">
    <property type="nucleotide sequence ID" value="NC_006510.1"/>
</dbReference>
<dbReference type="SMR" id="Q5L421"/>
<dbReference type="STRING" id="235909.GK0093"/>
<dbReference type="GeneID" id="32062081"/>
<dbReference type="KEGG" id="gka:GK0093"/>
<dbReference type="eggNOG" id="COG0080">
    <property type="taxonomic scope" value="Bacteria"/>
</dbReference>
<dbReference type="HOGENOM" id="CLU_074237_2_1_9"/>
<dbReference type="Proteomes" id="UP000001172">
    <property type="component" value="Chromosome"/>
</dbReference>
<dbReference type="GO" id="GO:0022625">
    <property type="term" value="C:cytosolic large ribosomal subunit"/>
    <property type="evidence" value="ECO:0007669"/>
    <property type="project" value="TreeGrafter"/>
</dbReference>
<dbReference type="GO" id="GO:0070180">
    <property type="term" value="F:large ribosomal subunit rRNA binding"/>
    <property type="evidence" value="ECO:0007669"/>
    <property type="project" value="UniProtKB-UniRule"/>
</dbReference>
<dbReference type="GO" id="GO:0003735">
    <property type="term" value="F:structural constituent of ribosome"/>
    <property type="evidence" value="ECO:0007669"/>
    <property type="project" value="InterPro"/>
</dbReference>
<dbReference type="GO" id="GO:0006412">
    <property type="term" value="P:translation"/>
    <property type="evidence" value="ECO:0007669"/>
    <property type="project" value="UniProtKB-UniRule"/>
</dbReference>
<dbReference type="CDD" id="cd00349">
    <property type="entry name" value="Ribosomal_L11"/>
    <property type="match status" value="1"/>
</dbReference>
<dbReference type="FunFam" id="1.10.10.250:FF:000001">
    <property type="entry name" value="50S ribosomal protein L11"/>
    <property type="match status" value="1"/>
</dbReference>
<dbReference type="FunFam" id="3.30.1550.10:FF:000001">
    <property type="entry name" value="50S ribosomal protein L11"/>
    <property type="match status" value="1"/>
</dbReference>
<dbReference type="Gene3D" id="1.10.10.250">
    <property type="entry name" value="Ribosomal protein L11, C-terminal domain"/>
    <property type="match status" value="1"/>
</dbReference>
<dbReference type="Gene3D" id="3.30.1550.10">
    <property type="entry name" value="Ribosomal protein L11/L12, N-terminal domain"/>
    <property type="match status" value="1"/>
</dbReference>
<dbReference type="HAMAP" id="MF_00736">
    <property type="entry name" value="Ribosomal_uL11"/>
    <property type="match status" value="1"/>
</dbReference>
<dbReference type="InterPro" id="IPR000911">
    <property type="entry name" value="Ribosomal_uL11"/>
</dbReference>
<dbReference type="InterPro" id="IPR006519">
    <property type="entry name" value="Ribosomal_uL11_bac-typ"/>
</dbReference>
<dbReference type="InterPro" id="IPR020783">
    <property type="entry name" value="Ribosomal_uL11_C"/>
</dbReference>
<dbReference type="InterPro" id="IPR036769">
    <property type="entry name" value="Ribosomal_uL11_C_sf"/>
</dbReference>
<dbReference type="InterPro" id="IPR020785">
    <property type="entry name" value="Ribosomal_uL11_CS"/>
</dbReference>
<dbReference type="InterPro" id="IPR020784">
    <property type="entry name" value="Ribosomal_uL11_N"/>
</dbReference>
<dbReference type="InterPro" id="IPR036796">
    <property type="entry name" value="Ribosomal_uL11_N_sf"/>
</dbReference>
<dbReference type="NCBIfam" id="TIGR01632">
    <property type="entry name" value="L11_bact"/>
    <property type="match status" value="1"/>
</dbReference>
<dbReference type="PANTHER" id="PTHR11661">
    <property type="entry name" value="60S RIBOSOMAL PROTEIN L12"/>
    <property type="match status" value="1"/>
</dbReference>
<dbReference type="PANTHER" id="PTHR11661:SF1">
    <property type="entry name" value="LARGE RIBOSOMAL SUBUNIT PROTEIN UL11M"/>
    <property type="match status" value="1"/>
</dbReference>
<dbReference type="Pfam" id="PF00298">
    <property type="entry name" value="Ribosomal_L11"/>
    <property type="match status" value="1"/>
</dbReference>
<dbReference type="Pfam" id="PF03946">
    <property type="entry name" value="Ribosomal_L11_N"/>
    <property type="match status" value="1"/>
</dbReference>
<dbReference type="SMART" id="SM00649">
    <property type="entry name" value="RL11"/>
    <property type="match status" value="1"/>
</dbReference>
<dbReference type="SUPFAM" id="SSF54747">
    <property type="entry name" value="Ribosomal L11/L12e N-terminal domain"/>
    <property type="match status" value="1"/>
</dbReference>
<dbReference type="SUPFAM" id="SSF46906">
    <property type="entry name" value="Ribosomal protein L11, C-terminal domain"/>
    <property type="match status" value="1"/>
</dbReference>
<dbReference type="PROSITE" id="PS00359">
    <property type="entry name" value="RIBOSOMAL_L11"/>
    <property type="match status" value="1"/>
</dbReference>
<proteinExistence type="inferred from homology"/>
<name>RL11_GEOKA</name>
<sequence>MAKKVIKVVKLQIPAGKANPAPPVGPALGQAGVNIMAFCKEFNARTADQAGLIIPVEITVFEDRSFTFITKTPPAAVLLKKAAGIESGSGEPNRNKVATIKRDKVREIAELKMPDLNAASIEAAMRMIEGTARSMGIVIED</sequence>
<reference key="1">
    <citation type="journal article" date="2004" name="Nucleic Acids Res.">
        <title>Thermoadaptation trait revealed by the genome sequence of thermophilic Geobacillus kaustophilus.</title>
        <authorList>
            <person name="Takami H."/>
            <person name="Takaki Y."/>
            <person name="Chee G.-J."/>
            <person name="Nishi S."/>
            <person name="Shimamura S."/>
            <person name="Suzuki H."/>
            <person name="Matsui S."/>
            <person name="Uchiyama I."/>
        </authorList>
    </citation>
    <scope>NUCLEOTIDE SEQUENCE [LARGE SCALE GENOMIC DNA]</scope>
    <source>
        <strain>HTA426</strain>
    </source>
</reference>
<accession>Q5L421</accession>
<comment type="function">
    <text evidence="1">Forms part of the ribosomal stalk which helps the ribosome interact with GTP-bound translation factors.</text>
</comment>
<comment type="subunit">
    <text evidence="1">Part of the ribosomal stalk of the 50S ribosomal subunit. Interacts with L10 and the large rRNA to form the base of the stalk. L10 forms an elongated spine to which L12 dimers bind in a sequential fashion forming a multimeric L10(L12)X complex.</text>
</comment>
<comment type="PTM">
    <text evidence="1">One or more lysine residues are methylated.</text>
</comment>
<comment type="similarity">
    <text evidence="1">Belongs to the universal ribosomal protein uL11 family.</text>
</comment>
<evidence type="ECO:0000255" key="1">
    <source>
        <dbReference type="HAMAP-Rule" id="MF_00736"/>
    </source>
</evidence>
<evidence type="ECO:0000305" key="2"/>
<organism>
    <name type="scientific">Geobacillus kaustophilus (strain HTA426)</name>
    <dbReference type="NCBI Taxonomy" id="235909"/>
    <lineage>
        <taxon>Bacteria</taxon>
        <taxon>Bacillati</taxon>
        <taxon>Bacillota</taxon>
        <taxon>Bacilli</taxon>
        <taxon>Bacillales</taxon>
        <taxon>Anoxybacillaceae</taxon>
        <taxon>Geobacillus</taxon>
        <taxon>Geobacillus thermoleovorans group</taxon>
    </lineage>
</organism>
<gene>
    <name evidence="1" type="primary">rplK</name>
    <name type="ordered locus">GK0093</name>
</gene>
<keyword id="KW-0488">Methylation</keyword>
<keyword id="KW-1185">Reference proteome</keyword>
<keyword id="KW-0687">Ribonucleoprotein</keyword>
<keyword id="KW-0689">Ribosomal protein</keyword>
<keyword id="KW-0694">RNA-binding</keyword>
<keyword id="KW-0699">rRNA-binding</keyword>